<name>Y1310_HAEIN</name>
<reference key="1">
    <citation type="journal article" date="1995" name="Science">
        <title>Whole-genome random sequencing and assembly of Haemophilus influenzae Rd.</title>
        <authorList>
            <person name="Fleischmann R.D."/>
            <person name="Adams M.D."/>
            <person name="White O."/>
            <person name="Clayton R.A."/>
            <person name="Kirkness E.F."/>
            <person name="Kerlavage A.R."/>
            <person name="Bult C.J."/>
            <person name="Tomb J.-F."/>
            <person name="Dougherty B.A."/>
            <person name="Merrick J.M."/>
            <person name="McKenney K."/>
            <person name="Sutton G.G."/>
            <person name="FitzHugh W."/>
            <person name="Fields C.A."/>
            <person name="Gocayne J.D."/>
            <person name="Scott J.D."/>
            <person name="Shirley R."/>
            <person name="Liu L.-I."/>
            <person name="Glodek A."/>
            <person name="Kelley J.M."/>
            <person name="Weidman J.F."/>
            <person name="Phillips C.A."/>
            <person name="Spriggs T."/>
            <person name="Hedblom E."/>
            <person name="Cotton M.D."/>
            <person name="Utterback T.R."/>
            <person name="Hanna M.C."/>
            <person name="Nguyen D.T."/>
            <person name="Saudek D.M."/>
            <person name="Brandon R.C."/>
            <person name="Fine L.D."/>
            <person name="Fritchman J.L."/>
            <person name="Fuhrmann J.L."/>
            <person name="Geoghagen N.S.M."/>
            <person name="Gnehm C.L."/>
            <person name="McDonald L.A."/>
            <person name="Small K.V."/>
            <person name="Fraser C.M."/>
            <person name="Smith H.O."/>
            <person name="Venter J.C."/>
        </authorList>
    </citation>
    <scope>NUCLEOTIDE SEQUENCE [LARGE SCALE GENOMIC DNA]</scope>
    <source>
        <strain>ATCC 51907 / DSM 11121 / KW20 / Rd</strain>
    </source>
</reference>
<proteinExistence type="predicted"/>
<gene>
    <name type="ordered locus">HI_1310</name>
</gene>
<keyword id="KW-1185">Reference proteome</keyword>
<feature type="chain" id="PRO_0000078023" description="Uncharacterized protein HI_1310">
    <location>
        <begin position="1"/>
        <end position="253"/>
    </location>
</feature>
<accession>P44158</accession>
<protein>
    <recommendedName>
        <fullName>Uncharacterized protein HI_1310</fullName>
    </recommendedName>
</protein>
<sequence length="253" mass="29371">MLLYKEKMKLLIKTSLSQWICLNFAKIPIFKMLGFITALFITACSSISKEPVKTVDIYIKPYYSAENGKAENVFVHKEIDPMLRENTIKGYKSAVKFVEENPARISPMTMFTLAARAYDFGLRDEAVTWFYRGQNRLITALYVLDLPKQTVQDNTGFSHVVGQFVNAYAFCNFDKQSLAAENAMKWTVAHPYEVVFLPALPAKFADRQKALKEAEEKLVQRLQEQARFFANPKNKEKWQKERSENFVNERFCW</sequence>
<organism>
    <name type="scientific">Haemophilus influenzae (strain ATCC 51907 / DSM 11121 / KW20 / Rd)</name>
    <dbReference type="NCBI Taxonomy" id="71421"/>
    <lineage>
        <taxon>Bacteria</taxon>
        <taxon>Pseudomonadati</taxon>
        <taxon>Pseudomonadota</taxon>
        <taxon>Gammaproteobacteria</taxon>
        <taxon>Pasteurellales</taxon>
        <taxon>Pasteurellaceae</taxon>
        <taxon>Haemophilus</taxon>
    </lineage>
</organism>
<dbReference type="EMBL" id="L42023">
    <property type="protein sequence ID" value="AAC22961.1"/>
    <property type="molecule type" value="Genomic_DNA"/>
</dbReference>
<dbReference type="PIR" id="E64025">
    <property type="entry name" value="E64025"/>
</dbReference>
<dbReference type="RefSeq" id="NP_439461.1">
    <property type="nucleotide sequence ID" value="NC_000907.1"/>
</dbReference>
<dbReference type="STRING" id="71421.HI_1310"/>
<dbReference type="EnsemblBacteria" id="AAC22961">
    <property type="protein sequence ID" value="AAC22961"/>
    <property type="gene ID" value="HI_1310"/>
</dbReference>
<dbReference type="KEGG" id="hin:HI_1310"/>
<dbReference type="PATRIC" id="fig|71421.8.peg.1362"/>
<dbReference type="eggNOG" id="ENOG5032XW1">
    <property type="taxonomic scope" value="Bacteria"/>
</dbReference>
<dbReference type="HOGENOM" id="CLU_1193021_0_0_6"/>
<dbReference type="OrthoDB" id="3574559at2"/>
<dbReference type="BioCyc" id="HINF71421:G1GJ1-1335-MONOMER"/>
<dbReference type="Proteomes" id="UP000000579">
    <property type="component" value="Chromosome"/>
</dbReference>